<organism>
    <name type="scientific">Pseudomonas paraeruginosa (strain DSM 24068 / PA7)</name>
    <name type="common">Pseudomonas aeruginosa (strain PA7)</name>
    <dbReference type="NCBI Taxonomy" id="381754"/>
    <lineage>
        <taxon>Bacteria</taxon>
        <taxon>Pseudomonadati</taxon>
        <taxon>Pseudomonadota</taxon>
        <taxon>Gammaproteobacteria</taxon>
        <taxon>Pseudomonadales</taxon>
        <taxon>Pseudomonadaceae</taxon>
        <taxon>Pseudomonas</taxon>
        <taxon>Pseudomonas paraeruginosa</taxon>
    </lineage>
</organism>
<protein>
    <recommendedName>
        <fullName evidence="1">Glycerol-3-phosphate dehydrogenase [NAD(P)+]</fullName>
        <ecNumber evidence="1">1.1.1.94</ecNumber>
    </recommendedName>
    <alternativeName>
        <fullName evidence="1">NAD(P)(+)-dependent glycerol-3-phosphate dehydrogenase</fullName>
    </alternativeName>
    <alternativeName>
        <fullName evidence="1">NAD(P)H-dependent dihydroxyacetone-phosphate reductase</fullName>
    </alternativeName>
</protein>
<proteinExistence type="inferred from homology"/>
<reference key="1">
    <citation type="submission" date="2007-06" db="EMBL/GenBank/DDBJ databases">
        <authorList>
            <person name="Dodson R.J."/>
            <person name="Harkins D."/>
            <person name="Paulsen I.T."/>
        </authorList>
    </citation>
    <scope>NUCLEOTIDE SEQUENCE [LARGE SCALE GENOMIC DNA]</scope>
    <source>
        <strain>DSM 24068 / PA7</strain>
    </source>
</reference>
<evidence type="ECO:0000255" key="1">
    <source>
        <dbReference type="HAMAP-Rule" id="MF_00394"/>
    </source>
</evidence>
<sequence length="340" mass="36825">MTEQQPIAVLGGGSFGTAIANLLAENGQAVRQWMRDPEQAEAIRSRRENPRYLKGVKVHPGVEPVTDLERTLADCQLIFVALPSSALRKVLQPHQLALTDKLLVSLTKGIEAHTFKLMSEILEEIAPQARIGVISGPNLAREIAEHELTATVVASEDDELCARVQAALHGRTFRVYASRDRFGVELGGALKNVYAIMAGLAAAMDMGENTRSMLITRALAEMTRFAVKLGANPMTFLGLAGVGDLIVTCSSPKSRNYQVGHALGEGLSLEQAVSRLGETAEGVNTLRVLKEKSDEMQVYMPLVAGLHAILFEGRTLAQVIQLLMRGEPKTDVDFIPTTGF</sequence>
<accession>A6V7H8</accession>
<gene>
    <name evidence="1" type="primary">gpsA</name>
    <name type="ordered locus">PSPA7_3659</name>
</gene>
<comment type="function">
    <text evidence="1">Catalyzes the reduction of the glycolytic intermediate dihydroxyacetone phosphate (DHAP) to sn-glycerol 3-phosphate (G3P), the key precursor for phospholipid synthesis.</text>
</comment>
<comment type="catalytic activity">
    <reaction evidence="1">
        <text>sn-glycerol 3-phosphate + NAD(+) = dihydroxyacetone phosphate + NADH + H(+)</text>
        <dbReference type="Rhea" id="RHEA:11092"/>
        <dbReference type="ChEBI" id="CHEBI:15378"/>
        <dbReference type="ChEBI" id="CHEBI:57540"/>
        <dbReference type="ChEBI" id="CHEBI:57597"/>
        <dbReference type="ChEBI" id="CHEBI:57642"/>
        <dbReference type="ChEBI" id="CHEBI:57945"/>
        <dbReference type="EC" id="1.1.1.94"/>
    </reaction>
    <physiologicalReaction direction="right-to-left" evidence="1">
        <dbReference type="Rhea" id="RHEA:11094"/>
    </physiologicalReaction>
</comment>
<comment type="catalytic activity">
    <reaction evidence="1">
        <text>sn-glycerol 3-phosphate + NADP(+) = dihydroxyacetone phosphate + NADPH + H(+)</text>
        <dbReference type="Rhea" id="RHEA:11096"/>
        <dbReference type="ChEBI" id="CHEBI:15378"/>
        <dbReference type="ChEBI" id="CHEBI:57597"/>
        <dbReference type="ChEBI" id="CHEBI:57642"/>
        <dbReference type="ChEBI" id="CHEBI:57783"/>
        <dbReference type="ChEBI" id="CHEBI:58349"/>
        <dbReference type="EC" id="1.1.1.94"/>
    </reaction>
    <physiologicalReaction direction="right-to-left" evidence="1">
        <dbReference type="Rhea" id="RHEA:11098"/>
    </physiologicalReaction>
</comment>
<comment type="pathway">
    <text evidence="1">Membrane lipid metabolism; glycerophospholipid metabolism.</text>
</comment>
<comment type="subcellular location">
    <subcellularLocation>
        <location evidence="1">Cytoplasm</location>
    </subcellularLocation>
</comment>
<comment type="similarity">
    <text evidence="1">Belongs to the NAD-dependent glycerol-3-phosphate dehydrogenase family.</text>
</comment>
<name>GPDA_PSEP7</name>
<dbReference type="EC" id="1.1.1.94" evidence="1"/>
<dbReference type="EMBL" id="CP000744">
    <property type="protein sequence ID" value="ABR82098.1"/>
    <property type="molecule type" value="Genomic_DNA"/>
</dbReference>
<dbReference type="RefSeq" id="WP_012076274.1">
    <property type="nucleotide sequence ID" value="NC_009656.1"/>
</dbReference>
<dbReference type="SMR" id="A6V7H8"/>
<dbReference type="GeneID" id="77221765"/>
<dbReference type="KEGG" id="pap:PSPA7_3659"/>
<dbReference type="HOGENOM" id="CLU_033449_0_2_6"/>
<dbReference type="UniPathway" id="UPA00940"/>
<dbReference type="Proteomes" id="UP000001582">
    <property type="component" value="Chromosome"/>
</dbReference>
<dbReference type="GO" id="GO:0005829">
    <property type="term" value="C:cytosol"/>
    <property type="evidence" value="ECO:0007669"/>
    <property type="project" value="TreeGrafter"/>
</dbReference>
<dbReference type="GO" id="GO:0047952">
    <property type="term" value="F:glycerol-3-phosphate dehydrogenase [NAD(P)+] activity"/>
    <property type="evidence" value="ECO:0007669"/>
    <property type="project" value="UniProtKB-UniRule"/>
</dbReference>
<dbReference type="GO" id="GO:0051287">
    <property type="term" value="F:NAD binding"/>
    <property type="evidence" value="ECO:0007669"/>
    <property type="project" value="InterPro"/>
</dbReference>
<dbReference type="GO" id="GO:0005975">
    <property type="term" value="P:carbohydrate metabolic process"/>
    <property type="evidence" value="ECO:0007669"/>
    <property type="project" value="InterPro"/>
</dbReference>
<dbReference type="GO" id="GO:0046167">
    <property type="term" value="P:glycerol-3-phosphate biosynthetic process"/>
    <property type="evidence" value="ECO:0007669"/>
    <property type="project" value="UniProtKB-UniRule"/>
</dbReference>
<dbReference type="GO" id="GO:0046168">
    <property type="term" value="P:glycerol-3-phosphate catabolic process"/>
    <property type="evidence" value="ECO:0007669"/>
    <property type="project" value="InterPro"/>
</dbReference>
<dbReference type="GO" id="GO:0046474">
    <property type="term" value="P:glycerophospholipid biosynthetic process"/>
    <property type="evidence" value="ECO:0007669"/>
    <property type="project" value="TreeGrafter"/>
</dbReference>
<dbReference type="FunFam" id="1.10.1040.10:FF:000001">
    <property type="entry name" value="Glycerol-3-phosphate dehydrogenase [NAD(P)+]"/>
    <property type="match status" value="1"/>
</dbReference>
<dbReference type="FunFam" id="3.40.50.720:FF:000019">
    <property type="entry name" value="Glycerol-3-phosphate dehydrogenase [NAD(P)+]"/>
    <property type="match status" value="1"/>
</dbReference>
<dbReference type="Gene3D" id="1.10.1040.10">
    <property type="entry name" value="N-(1-d-carboxylethyl)-l-norvaline Dehydrogenase, domain 2"/>
    <property type="match status" value="1"/>
</dbReference>
<dbReference type="Gene3D" id="3.40.50.720">
    <property type="entry name" value="NAD(P)-binding Rossmann-like Domain"/>
    <property type="match status" value="1"/>
</dbReference>
<dbReference type="HAMAP" id="MF_00394">
    <property type="entry name" value="NAD_Glyc3P_dehydrog"/>
    <property type="match status" value="1"/>
</dbReference>
<dbReference type="InterPro" id="IPR008927">
    <property type="entry name" value="6-PGluconate_DH-like_C_sf"/>
</dbReference>
<dbReference type="InterPro" id="IPR013328">
    <property type="entry name" value="6PGD_dom2"/>
</dbReference>
<dbReference type="InterPro" id="IPR006168">
    <property type="entry name" value="G3P_DH_NAD-dep"/>
</dbReference>
<dbReference type="InterPro" id="IPR006109">
    <property type="entry name" value="G3P_DH_NAD-dep_C"/>
</dbReference>
<dbReference type="InterPro" id="IPR011128">
    <property type="entry name" value="G3P_DH_NAD-dep_N"/>
</dbReference>
<dbReference type="InterPro" id="IPR036291">
    <property type="entry name" value="NAD(P)-bd_dom_sf"/>
</dbReference>
<dbReference type="NCBIfam" id="NF000940">
    <property type="entry name" value="PRK00094.1-2"/>
    <property type="match status" value="1"/>
</dbReference>
<dbReference type="NCBIfam" id="NF000942">
    <property type="entry name" value="PRK00094.1-4"/>
    <property type="match status" value="1"/>
</dbReference>
<dbReference type="NCBIfam" id="NF000946">
    <property type="entry name" value="PRK00094.2-4"/>
    <property type="match status" value="1"/>
</dbReference>
<dbReference type="PANTHER" id="PTHR11728">
    <property type="entry name" value="GLYCEROL-3-PHOSPHATE DEHYDROGENASE"/>
    <property type="match status" value="1"/>
</dbReference>
<dbReference type="PANTHER" id="PTHR11728:SF1">
    <property type="entry name" value="GLYCEROL-3-PHOSPHATE DEHYDROGENASE [NAD(+)] 2, CHLOROPLASTIC"/>
    <property type="match status" value="1"/>
</dbReference>
<dbReference type="Pfam" id="PF07479">
    <property type="entry name" value="NAD_Gly3P_dh_C"/>
    <property type="match status" value="1"/>
</dbReference>
<dbReference type="Pfam" id="PF01210">
    <property type="entry name" value="NAD_Gly3P_dh_N"/>
    <property type="match status" value="1"/>
</dbReference>
<dbReference type="PIRSF" id="PIRSF000114">
    <property type="entry name" value="Glycerol-3-P_dh"/>
    <property type="match status" value="1"/>
</dbReference>
<dbReference type="PRINTS" id="PR00077">
    <property type="entry name" value="GPDHDRGNASE"/>
</dbReference>
<dbReference type="SUPFAM" id="SSF48179">
    <property type="entry name" value="6-phosphogluconate dehydrogenase C-terminal domain-like"/>
    <property type="match status" value="1"/>
</dbReference>
<dbReference type="SUPFAM" id="SSF51735">
    <property type="entry name" value="NAD(P)-binding Rossmann-fold domains"/>
    <property type="match status" value="1"/>
</dbReference>
<dbReference type="PROSITE" id="PS00957">
    <property type="entry name" value="NAD_G3PDH"/>
    <property type="match status" value="1"/>
</dbReference>
<keyword id="KW-0963">Cytoplasm</keyword>
<keyword id="KW-0444">Lipid biosynthesis</keyword>
<keyword id="KW-0443">Lipid metabolism</keyword>
<keyword id="KW-0520">NAD</keyword>
<keyword id="KW-0521">NADP</keyword>
<keyword id="KW-0547">Nucleotide-binding</keyword>
<keyword id="KW-0560">Oxidoreductase</keyword>
<keyword id="KW-0594">Phospholipid biosynthesis</keyword>
<keyword id="KW-1208">Phospholipid metabolism</keyword>
<feature type="chain" id="PRO_1000049535" description="Glycerol-3-phosphate dehydrogenase [NAD(P)+]">
    <location>
        <begin position="1"/>
        <end position="340"/>
    </location>
</feature>
<feature type="active site" description="Proton acceptor" evidence="1">
    <location>
        <position position="191"/>
    </location>
</feature>
<feature type="binding site" evidence="1">
    <location>
        <position position="14"/>
    </location>
    <ligand>
        <name>NADPH</name>
        <dbReference type="ChEBI" id="CHEBI:57783"/>
    </ligand>
</feature>
<feature type="binding site" evidence="1">
    <location>
        <position position="15"/>
    </location>
    <ligand>
        <name>NADPH</name>
        <dbReference type="ChEBI" id="CHEBI:57783"/>
    </ligand>
</feature>
<feature type="binding site" evidence="1">
    <location>
        <position position="35"/>
    </location>
    <ligand>
        <name>NADPH</name>
        <dbReference type="ChEBI" id="CHEBI:57783"/>
    </ligand>
</feature>
<feature type="binding site" evidence="1">
    <location>
        <position position="108"/>
    </location>
    <ligand>
        <name>NADPH</name>
        <dbReference type="ChEBI" id="CHEBI:57783"/>
    </ligand>
</feature>
<feature type="binding site" evidence="1">
    <location>
        <position position="108"/>
    </location>
    <ligand>
        <name>sn-glycerol 3-phosphate</name>
        <dbReference type="ChEBI" id="CHEBI:57597"/>
    </ligand>
</feature>
<feature type="binding site" evidence="1">
    <location>
        <position position="136"/>
    </location>
    <ligand>
        <name>sn-glycerol 3-phosphate</name>
        <dbReference type="ChEBI" id="CHEBI:57597"/>
    </ligand>
</feature>
<feature type="binding site" evidence="1">
    <location>
        <position position="140"/>
    </location>
    <ligand>
        <name>NADPH</name>
        <dbReference type="ChEBI" id="CHEBI:57783"/>
    </ligand>
</feature>
<feature type="binding site" evidence="1">
    <location>
        <position position="191"/>
    </location>
    <ligand>
        <name>sn-glycerol 3-phosphate</name>
        <dbReference type="ChEBI" id="CHEBI:57597"/>
    </ligand>
</feature>
<feature type="binding site" evidence="1">
    <location>
        <position position="244"/>
    </location>
    <ligand>
        <name>sn-glycerol 3-phosphate</name>
        <dbReference type="ChEBI" id="CHEBI:57597"/>
    </ligand>
</feature>
<feature type="binding site" evidence="1">
    <location>
        <position position="254"/>
    </location>
    <ligand>
        <name>sn-glycerol 3-phosphate</name>
        <dbReference type="ChEBI" id="CHEBI:57597"/>
    </ligand>
</feature>
<feature type="binding site" evidence="1">
    <location>
        <position position="255"/>
    </location>
    <ligand>
        <name>NADPH</name>
        <dbReference type="ChEBI" id="CHEBI:57783"/>
    </ligand>
</feature>
<feature type="binding site" evidence="1">
    <location>
        <position position="255"/>
    </location>
    <ligand>
        <name>sn-glycerol 3-phosphate</name>
        <dbReference type="ChEBI" id="CHEBI:57597"/>
    </ligand>
</feature>
<feature type="binding site" evidence="1">
    <location>
        <position position="256"/>
    </location>
    <ligand>
        <name>sn-glycerol 3-phosphate</name>
        <dbReference type="ChEBI" id="CHEBI:57597"/>
    </ligand>
</feature>
<feature type="binding site" evidence="1">
    <location>
        <position position="281"/>
    </location>
    <ligand>
        <name>NADPH</name>
        <dbReference type="ChEBI" id="CHEBI:57783"/>
    </ligand>
</feature>